<accession>Q325V1</accession>
<proteinExistence type="inferred from homology"/>
<comment type="similarity">
    <text evidence="1">Belongs to the UPF0253 family.</text>
</comment>
<organism>
    <name type="scientific">Shigella boydii serotype 4 (strain Sb227)</name>
    <dbReference type="NCBI Taxonomy" id="300268"/>
    <lineage>
        <taxon>Bacteria</taxon>
        <taxon>Pseudomonadati</taxon>
        <taxon>Pseudomonadota</taxon>
        <taxon>Gammaproteobacteria</taxon>
        <taxon>Enterobacterales</taxon>
        <taxon>Enterobacteriaceae</taxon>
        <taxon>Shigella</taxon>
    </lineage>
</organism>
<gene>
    <name evidence="1" type="primary">yaeP</name>
    <name type="ordered locus">SBO_0178</name>
</gene>
<dbReference type="EMBL" id="CP000036">
    <property type="protein sequence ID" value="ABB64907.1"/>
    <property type="molecule type" value="Genomic_DNA"/>
</dbReference>
<dbReference type="RefSeq" id="WP_000417058.1">
    <property type="nucleotide sequence ID" value="NC_007613.1"/>
</dbReference>
<dbReference type="SMR" id="Q325V1"/>
<dbReference type="KEGG" id="sbo:SBO_0178"/>
<dbReference type="HOGENOM" id="CLU_190008_0_0_6"/>
<dbReference type="Proteomes" id="UP000007067">
    <property type="component" value="Chromosome"/>
</dbReference>
<dbReference type="HAMAP" id="MF_01064">
    <property type="entry name" value="UPF0253"/>
    <property type="match status" value="1"/>
</dbReference>
<dbReference type="InterPro" id="IPR009624">
    <property type="entry name" value="UPF0253"/>
</dbReference>
<dbReference type="NCBIfam" id="NF003436">
    <property type="entry name" value="PRK04964.1"/>
    <property type="match status" value="1"/>
</dbReference>
<dbReference type="Pfam" id="PF06786">
    <property type="entry name" value="UPF0253"/>
    <property type="match status" value="1"/>
</dbReference>
<protein>
    <recommendedName>
        <fullName evidence="1">UPF0253 protein YaeP</fullName>
    </recommendedName>
</protein>
<name>YAEP_SHIBS</name>
<evidence type="ECO:0000255" key="1">
    <source>
        <dbReference type="HAMAP-Rule" id="MF_01064"/>
    </source>
</evidence>
<feature type="chain" id="PRO_0000277523" description="UPF0253 protein YaeP">
    <location>
        <begin position="1"/>
        <end position="66"/>
    </location>
</feature>
<reference key="1">
    <citation type="journal article" date="2005" name="Nucleic Acids Res.">
        <title>Genome dynamics and diversity of Shigella species, the etiologic agents of bacillary dysentery.</title>
        <authorList>
            <person name="Yang F."/>
            <person name="Yang J."/>
            <person name="Zhang X."/>
            <person name="Chen L."/>
            <person name="Jiang Y."/>
            <person name="Yan Y."/>
            <person name="Tang X."/>
            <person name="Wang J."/>
            <person name="Xiong Z."/>
            <person name="Dong J."/>
            <person name="Xue Y."/>
            <person name="Zhu Y."/>
            <person name="Xu X."/>
            <person name="Sun L."/>
            <person name="Chen S."/>
            <person name="Nie H."/>
            <person name="Peng J."/>
            <person name="Xu J."/>
            <person name="Wang Y."/>
            <person name="Yuan Z."/>
            <person name="Wen Y."/>
            <person name="Yao Z."/>
            <person name="Shen Y."/>
            <person name="Qiang B."/>
            <person name="Hou Y."/>
            <person name="Yu J."/>
            <person name="Jin Q."/>
        </authorList>
    </citation>
    <scope>NUCLEOTIDE SEQUENCE [LARGE SCALE GENOMIC DNA]</scope>
    <source>
        <strain>Sb227</strain>
    </source>
</reference>
<sequence>MEKYCELIRKRYAEIASGDLGYVPDALGCVLKVLNEMAADDALSEAVREKAAYAAANLLVSDYVNE</sequence>